<proteinExistence type="inferred from homology"/>
<keyword id="KW-1185">Reference proteome</keyword>
<sequence>MKYTVIITKDEDGYYVVNVPALPGCFTQGKTKKEALINIKEAIRAYIESLKKHNEKIPRDNAEEITVHA</sequence>
<feature type="chain" id="PRO_0000157943" description="UPF0150 protein Ta0767">
    <location>
        <begin position="1"/>
        <end position="69"/>
    </location>
</feature>
<reference key="1">
    <citation type="journal article" date="2000" name="Nature">
        <title>The genome sequence of the thermoacidophilic scavenger Thermoplasma acidophilum.</title>
        <authorList>
            <person name="Ruepp A."/>
            <person name="Graml W."/>
            <person name="Santos-Martinez M.-L."/>
            <person name="Koretke K.K."/>
            <person name="Volker C."/>
            <person name="Mewes H.-W."/>
            <person name="Frishman D."/>
            <person name="Stocker S."/>
            <person name="Lupas A.N."/>
            <person name="Baumeister W."/>
        </authorList>
    </citation>
    <scope>NUCLEOTIDE SEQUENCE [LARGE SCALE GENOMIC DNA]</scope>
    <source>
        <strain>ATCC 25905 / DSM 1728 / JCM 9062 / NBRC 15155 / AMRC-C165</strain>
    </source>
</reference>
<dbReference type="EMBL" id="AL445065">
    <property type="protein sequence ID" value="CAC11899.1"/>
    <property type="molecule type" value="Genomic_DNA"/>
</dbReference>
<dbReference type="RefSeq" id="WP_010901181.1">
    <property type="nucleotide sequence ID" value="NC_002578.1"/>
</dbReference>
<dbReference type="SMR" id="Q9HK40"/>
<dbReference type="PaxDb" id="273075-Ta0767"/>
<dbReference type="EnsemblBacteria" id="CAC11899">
    <property type="protein sequence ID" value="CAC11899"/>
    <property type="gene ID" value="CAC11899"/>
</dbReference>
<dbReference type="KEGG" id="tac:Ta0767"/>
<dbReference type="eggNOG" id="arCOG02411">
    <property type="taxonomic scope" value="Archaea"/>
</dbReference>
<dbReference type="HOGENOM" id="CLU_114047_2_2_2"/>
<dbReference type="InParanoid" id="Q9HK40"/>
<dbReference type="OrthoDB" id="133743at2157"/>
<dbReference type="Proteomes" id="UP000001024">
    <property type="component" value="Chromosome"/>
</dbReference>
<dbReference type="Gene3D" id="3.30.160.250">
    <property type="match status" value="1"/>
</dbReference>
<dbReference type="InterPro" id="IPR031807">
    <property type="entry name" value="HicB-like"/>
</dbReference>
<dbReference type="InterPro" id="IPR051404">
    <property type="entry name" value="TA_system_antitoxin"/>
</dbReference>
<dbReference type="InterPro" id="IPR035069">
    <property type="entry name" value="TTHA1013/TTHA0281-like"/>
</dbReference>
<dbReference type="PANTHER" id="PTHR34504">
    <property type="entry name" value="ANTITOXIN HICB"/>
    <property type="match status" value="1"/>
</dbReference>
<dbReference type="PANTHER" id="PTHR34504:SF2">
    <property type="entry name" value="UPF0150 PROTEIN SSL0259"/>
    <property type="match status" value="1"/>
</dbReference>
<dbReference type="Pfam" id="PF15919">
    <property type="entry name" value="HicB_lk_antitox"/>
    <property type="match status" value="1"/>
</dbReference>
<dbReference type="SUPFAM" id="SSF143100">
    <property type="entry name" value="TTHA1013/TTHA0281-like"/>
    <property type="match status" value="1"/>
</dbReference>
<accession>Q9HK40</accession>
<evidence type="ECO:0000305" key="1"/>
<comment type="similarity">
    <text evidence="1">Belongs to the UPF0150 family.</text>
</comment>
<name>Y767_THEAC</name>
<organism>
    <name type="scientific">Thermoplasma acidophilum (strain ATCC 25905 / DSM 1728 / JCM 9062 / NBRC 15155 / AMRC-C165)</name>
    <dbReference type="NCBI Taxonomy" id="273075"/>
    <lineage>
        <taxon>Archaea</taxon>
        <taxon>Methanobacteriati</taxon>
        <taxon>Thermoplasmatota</taxon>
        <taxon>Thermoplasmata</taxon>
        <taxon>Thermoplasmatales</taxon>
        <taxon>Thermoplasmataceae</taxon>
        <taxon>Thermoplasma</taxon>
    </lineage>
</organism>
<gene>
    <name type="ordered locus">Ta0767</name>
</gene>
<protein>
    <recommendedName>
        <fullName>UPF0150 protein Ta0767</fullName>
    </recommendedName>
</protein>